<organism>
    <name type="scientific">Pyrococcus abyssi (strain GE5 / Orsay)</name>
    <dbReference type="NCBI Taxonomy" id="272844"/>
    <lineage>
        <taxon>Archaea</taxon>
        <taxon>Methanobacteriati</taxon>
        <taxon>Methanobacteriota</taxon>
        <taxon>Thermococci</taxon>
        <taxon>Thermococcales</taxon>
        <taxon>Thermococcaceae</taxon>
        <taxon>Pyrococcus</taxon>
    </lineage>
</organism>
<proteinExistence type="inferred from homology"/>
<reference key="1">
    <citation type="journal article" date="2003" name="Mol. Microbiol.">
        <title>An integrated analysis of the genome of the hyperthermophilic archaeon Pyrococcus abyssi.</title>
        <authorList>
            <person name="Cohen G.N."/>
            <person name="Barbe V."/>
            <person name="Flament D."/>
            <person name="Galperin M."/>
            <person name="Heilig R."/>
            <person name="Lecompte O."/>
            <person name="Poch O."/>
            <person name="Prieur D."/>
            <person name="Querellou J."/>
            <person name="Ripp R."/>
            <person name="Thierry J.-C."/>
            <person name="Van der Oost J."/>
            <person name="Weissenbach J."/>
            <person name="Zivanovic Y."/>
            <person name="Forterre P."/>
        </authorList>
    </citation>
    <scope>NUCLEOTIDE SEQUENCE [LARGE SCALE GENOMIC DNA]</scope>
    <source>
        <strain>GE5 / Orsay</strain>
    </source>
</reference>
<reference key="2">
    <citation type="journal article" date="2012" name="Curr. Microbiol.">
        <title>Re-annotation of two hyperthermophilic archaea Pyrococcus abyssi GE5 and Pyrococcus furiosus DSM 3638.</title>
        <authorList>
            <person name="Gao J."/>
            <person name="Wang J."/>
        </authorList>
    </citation>
    <scope>GENOME REANNOTATION</scope>
    <source>
        <strain>GE5 / Orsay</strain>
    </source>
</reference>
<comment type="similarity">
    <text evidence="1">Belongs to the RutC family.</text>
</comment>
<evidence type="ECO:0000305" key="1"/>
<sequence>MAKEVIFTEKAPKPIGPYSQAIKVGNFIFVAGQIPIDPETGEIVKGDIKEQTKRVIENIKAILEEAGASLNDVVKVTVYLKDLNDFAKMNEVYSEYFGESKPARVAVEVSRLPKDVLIEMEAIAYKE</sequence>
<gene>
    <name type="ordered locus">PYRAB12510</name>
    <name type="ORF">PAB0825</name>
</gene>
<protein>
    <recommendedName>
        <fullName>RutC family protein PYRAB12510</fullName>
    </recommendedName>
</protein>
<dbReference type="EMBL" id="AJ248287">
    <property type="protein sequence ID" value="CAB50156.1"/>
    <property type="molecule type" value="Genomic_DNA"/>
</dbReference>
<dbReference type="EMBL" id="HE613800">
    <property type="protein sequence ID" value="CCE70688.1"/>
    <property type="molecule type" value="Genomic_DNA"/>
</dbReference>
<dbReference type="PIR" id="G75032">
    <property type="entry name" value="G75032"/>
</dbReference>
<dbReference type="RefSeq" id="WP_010868364.1">
    <property type="nucleotide sequence ID" value="NC_000868.1"/>
</dbReference>
<dbReference type="SMR" id="Q9UZA3"/>
<dbReference type="STRING" id="272844.PAB0825"/>
<dbReference type="KEGG" id="pab:PAB0825"/>
<dbReference type="PATRIC" id="fig|272844.11.peg.1331"/>
<dbReference type="eggNOG" id="arCOG01630">
    <property type="taxonomic scope" value="Archaea"/>
</dbReference>
<dbReference type="HOGENOM" id="CLU_100715_7_3_2"/>
<dbReference type="OrthoDB" id="371655at2157"/>
<dbReference type="PhylomeDB" id="Q9UZA3"/>
<dbReference type="Proteomes" id="UP000000810">
    <property type="component" value="Chromosome"/>
</dbReference>
<dbReference type="Proteomes" id="UP000009139">
    <property type="component" value="Chromosome"/>
</dbReference>
<dbReference type="GO" id="GO:0005829">
    <property type="term" value="C:cytosol"/>
    <property type="evidence" value="ECO:0007669"/>
    <property type="project" value="TreeGrafter"/>
</dbReference>
<dbReference type="GO" id="GO:0019239">
    <property type="term" value="F:deaminase activity"/>
    <property type="evidence" value="ECO:0007669"/>
    <property type="project" value="TreeGrafter"/>
</dbReference>
<dbReference type="CDD" id="cd00448">
    <property type="entry name" value="YjgF_YER057c_UK114_family"/>
    <property type="match status" value="1"/>
</dbReference>
<dbReference type="FunFam" id="3.30.1330.40:FF:000001">
    <property type="entry name" value="L-PSP family endoribonuclease"/>
    <property type="match status" value="1"/>
</dbReference>
<dbReference type="Gene3D" id="3.30.1330.40">
    <property type="entry name" value="RutC-like"/>
    <property type="match status" value="1"/>
</dbReference>
<dbReference type="InterPro" id="IPR006056">
    <property type="entry name" value="RidA"/>
</dbReference>
<dbReference type="InterPro" id="IPR019897">
    <property type="entry name" value="RidA_CS"/>
</dbReference>
<dbReference type="InterPro" id="IPR035959">
    <property type="entry name" value="RutC-like_sf"/>
</dbReference>
<dbReference type="InterPro" id="IPR006175">
    <property type="entry name" value="YjgF/YER057c/UK114"/>
</dbReference>
<dbReference type="NCBIfam" id="TIGR00004">
    <property type="entry name" value="Rid family detoxifying hydrolase"/>
    <property type="match status" value="1"/>
</dbReference>
<dbReference type="PANTHER" id="PTHR11803">
    <property type="entry name" value="2-IMINOBUTANOATE/2-IMINOPROPANOATE DEAMINASE RIDA"/>
    <property type="match status" value="1"/>
</dbReference>
<dbReference type="PANTHER" id="PTHR11803:SF39">
    <property type="entry name" value="2-IMINOBUTANOATE_2-IMINOPROPANOATE DEAMINASE"/>
    <property type="match status" value="1"/>
</dbReference>
<dbReference type="Pfam" id="PF01042">
    <property type="entry name" value="Ribonuc_L-PSP"/>
    <property type="match status" value="1"/>
</dbReference>
<dbReference type="SUPFAM" id="SSF55298">
    <property type="entry name" value="YjgF-like"/>
    <property type="match status" value="1"/>
</dbReference>
<dbReference type="PROSITE" id="PS01094">
    <property type="entry name" value="UPF0076"/>
    <property type="match status" value="1"/>
</dbReference>
<accession>Q9UZA3</accession>
<accession>G8ZKP5</accession>
<feature type="chain" id="PRO_0000170343" description="RutC family protein PYRAB12510">
    <location>
        <begin position="1"/>
        <end position="127"/>
    </location>
</feature>
<name>Y1251_PYRAB</name>